<protein>
    <recommendedName>
        <fullName evidence="1">Succinate--CoA ligase [ADP-forming] subunit beta</fullName>
        <ecNumber evidence="1">6.2.1.5</ecNumber>
    </recommendedName>
    <alternativeName>
        <fullName evidence="1">Succinyl-CoA synthetase subunit beta</fullName>
        <shortName evidence="1">SCS-beta</shortName>
    </alternativeName>
</protein>
<reference key="1">
    <citation type="submission" date="2006-08" db="EMBL/GenBank/DDBJ databases">
        <title>Complete sequence of Shewanella sp. MR-4.</title>
        <authorList>
            <consortium name="US DOE Joint Genome Institute"/>
            <person name="Copeland A."/>
            <person name="Lucas S."/>
            <person name="Lapidus A."/>
            <person name="Barry K."/>
            <person name="Detter J.C."/>
            <person name="Glavina del Rio T."/>
            <person name="Hammon N."/>
            <person name="Israni S."/>
            <person name="Dalin E."/>
            <person name="Tice H."/>
            <person name="Pitluck S."/>
            <person name="Kiss H."/>
            <person name="Brettin T."/>
            <person name="Bruce D."/>
            <person name="Han C."/>
            <person name="Tapia R."/>
            <person name="Gilna P."/>
            <person name="Schmutz J."/>
            <person name="Larimer F."/>
            <person name="Land M."/>
            <person name="Hauser L."/>
            <person name="Kyrpides N."/>
            <person name="Mikhailova N."/>
            <person name="Nealson K."/>
            <person name="Konstantinidis K."/>
            <person name="Klappenbach J."/>
            <person name="Tiedje J."/>
            <person name="Richardson P."/>
        </authorList>
    </citation>
    <scope>NUCLEOTIDE SEQUENCE [LARGE SCALE GENOMIC DNA]</scope>
    <source>
        <strain>MR-4</strain>
    </source>
</reference>
<keyword id="KW-0067">ATP-binding</keyword>
<keyword id="KW-0436">Ligase</keyword>
<keyword id="KW-0460">Magnesium</keyword>
<keyword id="KW-0479">Metal-binding</keyword>
<keyword id="KW-0547">Nucleotide-binding</keyword>
<keyword id="KW-0816">Tricarboxylic acid cycle</keyword>
<dbReference type="EC" id="6.2.1.5" evidence="1"/>
<dbReference type="EMBL" id="CP000446">
    <property type="protein sequence ID" value="ABI38713.1"/>
    <property type="molecule type" value="Genomic_DNA"/>
</dbReference>
<dbReference type="RefSeq" id="WP_011622416.1">
    <property type="nucleotide sequence ID" value="NC_008321.1"/>
</dbReference>
<dbReference type="SMR" id="Q0HJQ4"/>
<dbReference type="GeneID" id="94727703"/>
<dbReference type="KEGG" id="she:Shewmr4_1637"/>
<dbReference type="HOGENOM" id="CLU_037430_0_2_6"/>
<dbReference type="UniPathway" id="UPA00223">
    <property type="reaction ID" value="UER00999"/>
</dbReference>
<dbReference type="GO" id="GO:0005829">
    <property type="term" value="C:cytosol"/>
    <property type="evidence" value="ECO:0007669"/>
    <property type="project" value="TreeGrafter"/>
</dbReference>
<dbReference type="GO" id="GO:0042709">
    <property type="term" value="C:succinate-CoA ligase complex"/>
    <property type="evidence" value="ECO:0007669"/>
    <property type="project" value="TreeGrafter"/>
</dbReference>
<dbReference type="GO" id="GO:0005524">
    <property type="term" value="F:ATP binding"/>
    <property type="evidence" value="ECO:0007669"/>
    <property type="project" value="UniProtKB-UniRule"/>
</dbReference>
<dbReference type="GO" id="GO:0000287">
    <property type="term" value="F:magnesium ion binding"/>
    <property type="evidence" value="ECO:0007669"/>
    <property type="project" value="UniProtKB-UniRule"/>
</dbReference>
<dbReference type="GO" id="GO:0004775">
    <property type="term" value="F:succinate-CoA ligase (ADP-forming) activity"/>
    <property type="evidence" value="ECO:0007669"/>
    <property type="project" value="UniProtKB-UniRule"/>
</dbReference>
<dbReference type="GO" id="GO:0004776">
    <property type="term" value="F:succinate-CoA ligase (GDP-forming) activity"/>
    <property type="evidence" value="ECO:0007669"/>
    <property type="project" value="RHEA"/>
</dbReference>
<dbReference type="GO" id="GO:0006104">
    <property type="term" value="P:succinyl-CoA metabolic process"/>
    <property type="evidence" value="ECO:0007669"/>
    <property type="project" value="TreeGrafter"/>
</dbReference>
<dbReference type="GO" id="GO:0006099">
    <property type="term" value="P:tricarboxylic acid cycle"/>
    <property type="evidence" value="ECO:0007669"/>
    <property type="project" value="UniProtKB-UniRule"/>
</dbReference>
<dbReference type="FunFam" id="3.30.1490.20:FF:000002">
    <property type="entry name" value="Succinate--CoA ligase [ADP-forming] subunit beta"/>
    <property type="match status" value="1"/>
</dbReference>
<dbReference type="FunFam" id="3.30.470.20:FF:000002">
    <property type="entry name" value="Succinate--CoA ligase [ADP-forming] subunit beta"/>
    <property type="match status" value="1"/>
</dbReference>
<dbReference type="FunFam" id="3.40.50.261:FF:000001">
    <property type="entry name" value="Succinate--CoA ligase [ADP-forming] subunit beta"/>
    <property type="match status" value="1"/>
</dbReference>
<dbReference type="Gene3D" id="3.30.1490.20">
    <property type="entry name" value="ATP-grasp fold, A domain"/>
    <property type="match status" value="1"/>
</dbReference>
<dbReference type="Gene3D" id="3.30.470.20">
    <property type="entry name" value="ATP-grasp fold, B domain"/>
    <property type="match status" value="1"/>
</dbReference>
<dbReference type="Gene3D" id="3.40.50.261">
    <property type="entry name" value="Succinyl-CoA synthetase domains"/>
    <property type="match status" value="1"/>
</dbReference>
<dbReference type="HAMAP" id="MF_00558">
    <property type="entry name" value="Succ_CoA_beta"/>
    <property type="match status" value="1"/>
</dbReference>
<dbReference type="InterPro" id="IPR011761">
    <property type="entry name" value="ATP-grasp"/>
</dbReference>
<dbReference type="InterPro" id="IPR013650">
    <property type="entry name" value="ATP-grasp_succ-CoA_synth-type"/>
</dbReference>
<dbReference type="InterPro" id="IPR013815">
    <property type="entry name" value="ATP_grasp_subdomain_1"/>
</dbReference>
<dbReference type="InterPro" id="IPR017866">
    <property type="entry name" value="Succ-CoA_synthase_bsu_CS"/>
</dbReference>
<dbReference type="InterPro" id="IPR005811">
    <property type="entry name" value="SUCC_ACL_C"/>
</dbReference>
<dbReference type="InterPro" id="IPR005809">
    <property type="entry name" value="Succ_CoA_ligase-like_bsu"/>
</dbReference>
<dbReference type="InterPro" id="IPR016102">
    <property type="entry name" value="Succinyl-CoA_synth-like"/>
</dbReference>
<dbReference type="NCBIfam" id="NF001913">
    <property type="entry name" value="PRK00696.1"/>
    <property type="match status" value="1"/>
</dbReference>
<dbReference type="NCBIfam" id="TIGR01016">
    <property type="entry name" value="sucCoAbeta"/>
    <property type="match status" value="1"/>
</dbReference>
<dbReference type="PANTHER" id="PTHR11815:SF10">
    <property type="entry name" value="SUCCINATE--COA LIGASE [GDP-FORMING] SUBUNIT BETA, MITOCHONDRIAL"/>
    <property type="match status" value="1"/>
</dbReference>
<dbReference type="PANTHER" id="PTHR11815">
    <property type="entry name" value="SUCCINYL-COA SYNTHETASE BETA CHAIN"/>
    <property type="match status" value="1"/>
</dbReference>
<dbReference type="Pfam" id="PF08442">
    <property type="entry name" value="ATP-grasp_2"/>
    <property type="match status" value="1"/>
</dbReference>
<dbReference type="Pfam" id="PF00549">
    <property type="entry name" value="Ligase_CoA"/>
    <property type="match status" value="1"/>
</dbReference>
<dbReference type="PIRSF" id="PIRSF001554">
    <property type="entry name" value="SucCS_beta"/>
    <property type="match status" value="1"/>
</dbReference>
<dbReference type="SUPFAM" id="SSF56059">
    <property type="entry name" value="Glutathione synthetase ATP-binding domain-like"/>
    <property type="match status" value="1"/>
</dbReference>
<dbReference type="SUPFAM" id="SSF52210">
    <property type="entry name" value="Succinyl-CoA synthetase domains"/>
    <property type="match status" value="1"/>
</dbReference>
<dbReference type="PROSITE" id="PS50975">
    <property type="entry name" value="ATP_GRASP"/>
    <property type="match status" value="1"/>
</dbReference>
<dbReference type="PROSITE" id="PS01217">
    <property type="entry name" value="SUCCINYL_COA_LIG_3"/>
    <property type="match status" value="1"/>
</dbReference>
<comment type="function">
    <text evidence="1">Succinyl-CoA synthetase functions in the citric acid cycle (TCA), coupling the hydrolysis of succinyl-CoA to the synthesis of either ATP or GTP and thus represents the only step of substrate-level phosphorylation in the TCA. The beta subunit provides nucleotide specificity of the enzyme and binds the substrate succinate, while the binding sites for coenzyme A and phosphate are found in the alpha subunit.</text>
</comment>
<comment type="catalytic activity">
    <reaction evidence="1">
        <text>succinate + ATP + CoA = succinyl-CoA + ADP + phosphate</text>
        <dbReference type="Rhea" id="RHEA:17661"/>
        <dbReference type="ChEBI" id="CHEBI:30031"/>
        <dbReference type="ChEBI" id="CHEBI:30616"/>
        <dbReference type="ChEBI" id="CHEBI:43474"/>
        <dbReference type="ChEBI" id="CHEBI:57287"/>
        <dbReference type="ChEBI" id="CHEBI:57292"/>
        <dbReference type="ChEBI" id="CHEBI:456216"/>
        <dbReference type="EC" id="6.2.1.5"/>
    </reaction>
    <physiologicalReaction direction="right-to-left" evidence="1">
        <dbReference type="Rhea" id="RHEA:17663"/>
    </physiologicalReaction>
</comment>
<comment type="catalytic activity">
    <reaction evidence="1">
        <text>GTP + succinate + CoA = succinyl-CoA + GDP + phosphate</text>
        <dbReference type="Rhea" id="RHEA:22120"/>
        <dbReference type="ChEBI" id="CHEBI:30031"/>
        <dbReference type="ChEBI" id="CHEBI:37565"/>
        <dbReference type="ChEBI" id="CHEBI:43474"/>
        <dbReference type="ChEBI" id="CHEBI:57287"/>
        <dbReference type="ChEBI" id="CHEBI:57292"/>
        <dbReference type="ChEBI" id="CHEBI:58189"/>
    </reaction>
    <physiologicalReaction direction="right-to-left" evidence="1">
        <dbReference type="Rhea" id="RHEA:22122"/>
    </physiologicalReaction>
</comment>
<comment type="cofactor">
    <cofactor evidence="1">
        <name>Mg(2+)</name>
        <dbReference type="ChEBI" id="CHEBI:18420"/>
    </cofactor>
    <text evidence="1">Binds 1 Mg(2+) ion per subunit.</text>
</comment>
<comment type="pathway">
    <text evidence="1">Carbohydrate metabolism; tricarboxylic acid cycle; succinate from succinyl-CoA (ligase route): step 1/1.</text>
</comment>
<comment type="subunit">
    <text evidence="1">Heterotetramer of two alpha and two beta subunits.</text>
</comment>
<comment type="similarity">
    <text evidence="1">Belongs to the succinate/malate CoA ligase beta subunit family.</text>
</comment>
<gene>
    <name evidence="1" type="primary">sucC</name>
    <name type="ordered locus">Shewmr4_1637</name>
</gene>
<proteinExistence type="inferred from homology"/>
<name>SUCC_SHESM</name>
<feature type="chain" id="PRO_1000082229" description="Succinate--CoA ligase [ADP-forming] subunit beta">
    <location>
        <begin position="1"/>
        <end position="388"/>
    </location>
</feature>
<feature type="domain" description="ATP-grasp" evidence="1">
    <location>
        <begin position="9"/>
        <end position="244"/>
    </location>
</feature>
<feature type="binding site" evidence="1">
    <location>
        <position position="46"/>
    </location>
    <ligand>
        <name>ATP</name>
        <dbReference type="ChEBI" id="CHEBI:30616"/>
    </ligand>
</feature>
<feature type="binding site" evidence="1">
    <location>
        <begin position="53"/>
        <end position="55"/>
    </location>
    <ligand>
        <name>ATP</name>
        <dbReference type="ChEBI" id="CHEBI:30616"/>
    </ligand>
</feature>
<feature type="binding site" evidence="1">
    <location>
        <position position="99"/>
    </location>
    <ligand>
        <name>ATP</name>
        <dbReference type="ChEBI" id="CHEBI:30616"/>
    </ligand>
</feature>
<feature type="binding site" evidence="1">
    <location>
        <position position="102"/>
    </location>
    <ligand>
        <name>ATP</name>
        <dbReference type="ChEBI" id="CHEBI:30616"/>
    </ligand>
</feature>
<feature type="binding site" evidence="1">
    <location>
        <position position="107"/>
    </location>
    <ligand>
        <name>ATP</name>
        <dbReference type="ChEBI" id="CHEBI:30616"/>
    </ligand>
</feature>
<feature type="binding site" evidence="1">
    <location>
        <position position="199"/>
    </location>
    <ligand>
        <name>Mg(2+)</name>
        <dbReference type="ChEBI" id="CHEBI:18420"/>
    </ligand>
</feature>
<feature type="binding site" evidence="1">
    <location>
        <position position="213"/>
    </location>
    <ligand>
        <name>Mg(2+)</name>
        <dbReference type="ChEBI" id="CHEBI:18420"/>
    </ligand>
</feature>
<feature type="binding site" evidence="1">
    <location>
        <position position="264"/>
    </location>
    <ligand>
        <name>substrate</name>
        <note>ligand shared with subunit alpha</note>
    </ligand>
</feature>
<feature type="binding site" evidence="1">
    <location>
        <begin position="321"/>
        <end position="323"/>
    </location>
    <ligand>
        <name>substrate</name>
        <note>ligand shared with subunit alpha</note>
    </ligand>
</feature>
<sequence>MNLHEYQAKSLFAEYGLPVSEGFACDTAQEAVEAAGRIGGNLWVVKCQVHAGGRGKAGGVKVTGDKEEIRAFAEHWLGKNLVTYQTDEKGQPVAKILVESCTDIANELYLGAVVDRATRRVVFMASTEGGVEIEKVAEETPELIHKAIIDPLTGPQPYQARDLGFKLGLNPTQMKQFTKIFMGLATMFVDHDFALLEINPLVITTEGNLHCLDGKIGIDGNALFRQPKIKAMHDPSQDDAREAHAAMFELNYVALDGNVGCMVNGAGLAMGTMDIVNLHGGKPANFLDVGGGATKERVAEAFKIILSDSNVKAVLVNIFGGIVRCDMIAEGIIGAVKEVGVKVPVVVRLEGTNAELGREVLAKSGLDIIAANSLTDAAEQVVKAAEGK</sequence>
<evidence type="ECO:0000255" key="1">
    <source>
        <dbReference type="HAMAP-Rule" id="MF_00558"/>
    </source>
</evidence>
<accession>Q0HJQ4</accession>
<organism>
    <name type="scientific">Shewanella sp. (strain MR-4)</name>
    <dbReference type="NCBI Taxonomy" id="60480"/>
    <lineage>
        <taxon>Bacteria</taxon>
        <taxon>Pseudomonadati</taxon>
        <taxon>Pseudomonadota</taxon>
        <taxon>Gammaproteobacteria</taxon>
        <taxon>Alteromonadales</taxon>
        <taxon>Shewanellaceae</taxon>
        <taxon>Shewanella</taxon>
    </lineage>
</organism>